<proteinExistence type="uncertain"/>
<dbReference type="EMBL" id="D86519">
    <property type="protein sequence ID" value="BAA13103.1"/>
    <property type="molecule type" value="mRNA"/>
</dbReference>
<dbReference type="EMBL" id="U59431">
    <property type="status" value="NOT_ANNOTATED_CDS"/>
    <property type="molecule type" value="mRNA"/>
</dbReference>
<dbReference type="EMBL" id="U67780">
    <property type="status" value="NOT_ANNOTATED_CDS"/>
    <property type="molecule type" value="mRNA"/>
</dbReference>
<dbReference type="EMBL" id="CH471062">
    <property type="protein sequence ID" value="EAW62180.1"/>
    <property type="molecule type" value="Genomic_DNA"/>
</dbReference>
<dbReference type="EMBL" id="CH471062">
    <property type="protein sequence ID" value="EAW62181.1"/>
    <property type="molecule type" value="Genomic_DNA"/>
</dbReference>
<dbReference type="SMR" id="Q99463"/>
<dbReference type="FunCoup" id="Q99463">
    <property type="interactions" value="138"/>
</dbReference>
<dbReference type="IntAct" id="Q99463">
    <property type="interactions" value="2"/>
</dbReference>
<dbReference type="MINT" id="Q99463"/>
<dbReference type="GlyCosmos" id="Q99463">
    <property type="glycosylation" value="1 site, No reported glycans"/>
</dbReference>
<dbReference type="GlyGen" id="Q99463">
    <property type="glycosylation" value="2 sites, 1 O-linked glycan (1 site)"/>
</dbReference>
<dbReference type="iPTMnet" id="Q99463"/>
<dbReference type="PhosphoSitePlus" id="Q99463"/>
<dbReference type="BioMuta" id="HGNC:7959"/>
<dbReference type="DMDM" id="74762699"/>
<dbReference type="PeptideAtlas" id="Q99463"/>
<dbReference type="AGR" id="HGNC:7959"/>
<dbReference type="GeneCards" id="NPY6R"/>
<dbReference type="HGNC" id="HGNC:7959">
    <property type="gene designation" value="NPY6R"/>
</dbReference>
<dbReference type="MIM" id="601770">
    <property type="type" value="gene"/>
</dbReference>
<dbReference type="neXtProt" id="NX_Q99463"/>
<dbReference type="InParanoid" id="Q99463"/>
<dbReference type="PAN-GO" id="Q99463">
    <property type="GO annotations" value="4 GO annotations based on evolutionary models"/>
</dbReference>
<dbReference type="PhylomeDB" id="Q99463"/>
<dbReference type="PathwayCommons" id="Q99463"/>
<dbReference type="ChiTaRS" id="NPY6R">
    <property type="organism name" value="human"/>
</dbReference>
<dbReference type="Pharos" id="Q99463">
    <property type="development level" value="Tdark"/>
</dbReference>
<dbReference type="Proteomes" id="UP000005640">
    <property type="component" value="Unplaced"/>
</dbReference>
<dbReference type="RNAct" id="Q99463">
    <property type="molecule type" value="protein"/>
</dbReference>
<dbReference type="GO" id="GO:0043005">
    <property type="term" value="C:neuron projection"/>
    <property type="evidence" value="ECO:0000318"/>
    <property type="project" value="GO_Central"/>
</dbReference>
<dbReference type="GO" id="GO:0005886">
    <property type="term" value="C:plasma membrane"/>
    <property type="evidence" value="ECO:0000318"/>
    <property type="project" value="GO_Central"/>
</dbReference>
<dbReference type="GO" id="GO:0042923">
    <property type="term" value="F:neuropeptide binding"/>
    <property type="evidence" value="ECO:0000318"/>
    <property type="project" value="GO_Central"/>
</dbReference>
<dbReference type="GO" id="GO:0008188">
    <property type="term" value="F:neuropeptide receptor activity"/>
    <property type="evidence" value="ECO:0000318"/>
    <property type="project" value="GO_Central"/>
</dbReference>
<dbReference type="FunFam" id="1.20.1070.10:FF:000721">
    <property type="entry name" value="Uncharacterized protein"/>
    <property type="match status" value="1"/>
</dbReference>
<dbReference type="Gene3D" id="1.20.1070.10">
    <property type="entry name" value="Rhodopsin 7-helix transmembrane proteins"/>
    <property type="match status" value="1"/>
</dbReference>
<dbReference type="InterPro" id="IPR000276">
    <property type="entry name" value="GPCR_Rhodpsn"/>
</dbReference>
<dbReference type="InterPro" id="IPR017452">
    <property type="entry name" value="GPCR_Rhodpsn_7TM"/>
</dbReference>
<dbReference type="InterPro" id="IPR000986">
    <property type="entry name" value="NeuroY6_rcpt"/>
</dbReference>
<dbReference type="InterPro" id="IPR000611">
    <property type="entry name" value="NPY_rcpt"/>
</dbReference>
<dbReference type="PANTHER" id="PTHR24235">
    <property type="entry name" value="NEUROPEPTIDE Y RECEPTOR"/>
    <property type="match status" value="1"/>
</dbReference>
<dbReference type="PANTHER" id="PTHR24235:SF16">
    <property type="entry name" value="NEUROPEPTIDE Y RECEPTOR TYPE 6-RELATED"/>
    <property type="match status" value="1"/>
</dbReference>
<dbReference type="Pfam" id="PF00001">
    <property type="entry name" value="7tm_1"/>
    <property type="match status" value="1"/>
</dbReference>
<dbReference type="PRINTS" id="PR00237">
    <property type="entry name" value="GPCRRHODOPSN"/>
</dbReference>
<dbReference type="PRINTS" id="PR01017">
    <property type="entry name" value="NRPEPTIDEY6R"/>
</dbReference>
<dbReference type="PRINTS" id="PR01012">
    <property type="entry name" value="NRPEPTIDEYR"/>
</dbReference>
<dbReference type="SUPFAM" id="SSF81321">
    <property type="entry name" value="Family A G protein-coupled receptor-like"/>
    <property type="match status" value="1"/>
</dbReference>
<dbReference type="PROSITE" id="PS00237">
    <property type="entry name" value="G_PROTEIN_RECEP_F1_1"/>
    <property type="match status" value="1"/>
</dbReference>
<dbReference type="PROSITE" id="PS50262">
    <property type="entry name" value="G_PROTEIN_RECEP_F1_2"/>
    <property type="match status" value="1"/>
</dbReference>
<name>NPY6R_HUMAN</name>
<gene>
    <name type="primary">NPY6R</name>
    <name type="synonym">NPY1RL</name>
    <name type="synonym">Y2B</name>
</gene>
<accession>Q99463</accession>
<accession>D3DQB4</accession>
<evidence type="ECO:0000255" key="1"/>
<evidence type="ECO:0000255" key="2">
    <source>
        <dbReference type="PROSITE-ProRule" id="PRU00521"/>
    </source>
</evidence>
<evidence type="ECO:0000269" key="3">
    <source>
    </source>
</evidence>
<evidence type="ECO:0000269" key="4">
    <source>
    </source>
</evidence>
<evidence type="ECO:0000305" key="5"/>
<feature type="chain" id="PRO_0000346130" description="Putative neuropeptide Y receptor type 6">
    <location>
        <begin position="1"/>
        <end position="290"/>
    </location>
</feature>
<feature type="topological domain" description="Extracellular" evidence="1">
    <location>
        <begin position="1"/>
        <end position="39"/>
    </location>
</feature>
<feature type="transmembrane region" description="Helical; Name=1" evidence="1">
    <location>
        <begin position="40"/>
        <end position="60"/>
    </location>
</feature>
<feature type="topological domain" description="Cytoplasmic" evidence="1">
    <location>
        <begin position="61"/>
        <end position="83"/>
    </location>
</feature>
<feature type="transmembrane region" description="Helical; Name=2" evidence="1">
    <location>
        <begin position="84"/>
        <end position="104"/>
    </location>
</feature>
<feature type="topological domain" description="Extracellular" evidence="1">
    <location>
        <begin position="105"/>
        <end position="111"/>
    </location>
</feature>
<feature type="transmembrane region" description="Helical; Name=3" evidence="1">
    <location>
        <begin position="112"/>
        <end position="132"/>
    </location>
</feature>
<feature type="topological domain" description="Cytoplasmic" evidence="1">
    <location>
        <begin position="133"/>
        <end position="150"/>
    </location>
</feature>
<feature type="transmembrane region" description="Helical; Name=4" evidence="1">
    <location>
        <begin position="151"/>
        <end position="171"/>
    </location>
</feature>
<feature type="topological domain" description="Extracellular" evidence="1">
    <location>
        <begin position="172"/>
        <end position="206"/>
    </location>
</feature>
<feature type="transmembrane region" description="Helical; Name=5" evidence="1">
    <location>
        <begin position="207"/>
        <end position="227"/>
    </location>
</feature>
<feature type="topological domain" description="Cytoplasmic" evidence="1">
    <location>
        <begin position="228"/>
        <end position="258"/>
    </location>
</feature>
<feature type="transmembrane region" description="Helical; Name=6" evidence="1">
    <location>
        <begin position="259"/>
        <end position="279"/>
    </location>
</feature>
<feature type="topological domain" description="Extracellular" evidence="1">
    <location>
        <begin position="280"/>
        <end position="290"/>
    </location>
</feature>
<feature type="glycosylation site" description="N-linked (GlcNAc...) asparagine" evidence="1">
    <location>
        <position position="11"/>
    </location>
</feature>
<feature type="disulfide bond" evidence="2">
    <location>
        <begin position="109"/>
        <end position="196"/>
    </location>
</feature>
<feature type="sequence conflict" description="In Ref. 2; U59431." evidence="5" ref="2">
    <original>G</original>
    <variation>S</variation>
    <location>
        <position position="154"/>
    </location>
</feature>
<comment type="function">
    <text evidence="3 4">When expressed, is unable to bind pancreatic polypeptide (PP), neuropeptide Y (NPY), or peptide YY (PYY), suggesting that either it is functionally inactive or that it may have acquired a pancreatic polypeptide-independent function.</text>
</comment>
<comment type="subcellular location">
    <subcellularLocation>
        <location evidence="5">Membrane</location>
        <topology evidence="5">Multi-pass membrane protein</topology>
    </subcellularLocation>
</comment>
<comment type="tissue specificity">
    <text evidence="3 4">Expressed in heart, skeletal muscle, gastrointestinal tissues, spleen, brain and adrenal glands.</text>
</comment>
<comment type="similarity">
    <text evidence="2">Belongs to the G-protein coupled receptor 1 family.</text>
</comment>
<comment type="caution">
    <text evidence="5">Could be the product of a pseudogene. According to PubMed:8910290, PubMed:8910373, PubMed:9013614, the human NPY6R gene is an expressed pseudogene containing a premature stop codon and encoding a non-functional truncated protein missing the last transmembrane domain. A single base pair deletion relative to the mouse ortholog, results in a truncated protein lacking the seventh transmembrane domain.</text>
</comment>
<organism>
    <name type="scientific">Homo sapiens</name>
    <name type="common">Human</name>
    <dbReference type="NCBI Taxonomy" id="9606"/>
    <lineage>
        <taxon>Eukaryota</taxon>
        <taxon>Metazoa</taxon>
        <taxon>Chordata</taxon>
        <taxon>Craniata</taxon>
        <taxon>Vertebrata</taxon>
        <taxon>Euteleostomi</taxon>
        <taxon>Mammalia</taxon>
        <taxon>Eutheria</taxon>
        <taxon>Euarchontoglires</taxon>
        <taxon>Primates</taxon>
        <taxon>Haplorrhini</taxon>
        <taxon>Catarrhini</taxon>
        <taxon>Hominidae</taxon>
        <taxon>Homo</taxon>
    </lineage>
</organism>
<reference key="1">
    <citation type="journal article" date="1996" name="J. Biol. Chem.">
        <title>Inactivation of a novel neuropeptide Y/peptide YY receptor gene in primate species.</title>
        <authorList>
            <person name="Matsumoto M."/>
            <person name="Nomura T."/>
            <person name="Momose K."/>
            <person name="Ikeda Y."/>
            <person name="Kondou Y."/>
            <person name="Akiho H."/>
            <person name="Togami J."/>
            <person name="Kimura Y."/>
            <person name="Okada M."/>
            <person name="Yamaguchi T."/>
        </authorList>
    </citation>
    <scope>NUCLEOTIDE SEQUENCE [MRNA]</scope>
    <scope>FUNCTION</scope>
    <scope>TISSUE SPECIFICITY</scope>
    <source>
        <tissue>Caudate nucleus</tissue>
    </source>
</reference>
<reference key="2">
    <citation type="journal article" date="1996" name="J. Biol. Chem.">
        <title>Molecular characterization of a second mouse pancreatic polypeptide receptor and its inactivated human homologue.</title>
        <authorList>
            <person name="Gregor P."/>
            <person name="Feng Y."/>
            <person name="Decarr L.B."/>
            <person name="Cornfield L.J."/>
            <person name="McCaleb M.L."/>
        </authorList>
    </citation>
    <scope>NUCLEOTIDE SEQUENCE [MRNA]</scope>
    <scope>FUNCTION</scope>
    <scope>TISSUE SPECIFICITY</scope>
    <source>
        <tissue>Heart</tissue>
    </source>
</reference>
<reference key="3">
    <citation type="journal article" date="1997" name="J. Biol. Chem.">
        <title>Molecular genetic analysis of a human neuropeptide Y receptor. The human homolog of the murine 'Y5' receptor may be a pseudogene.</title>
        <authorList>
            <person name="Rose P.M."/>
            <person name="Lynch J.S."/>
            <person name="Frazier S.T."/>
            <person name="Fisher S.M."/>
            <person name="Chung W."/>
            <person name="Battaglino P."/>
            <person name="Fathi Z."/>
            <person name="Leibel R."/>
            <person name="Fernandes P."/>
        </authorList>
    </citation>
    <scope>NUCLEOTIDE SEQUENCE [MRNA]</scope>
    <source>
        <tissue>Hypothalamus</tissue>
    </source>
</reference>
<reference key="4">
    <citation type="submission" date="2005-09" db="EMBL/GenBank/DDBJ databases">
        <authorList>
            <person name="Mural R.J."/>
            <person name="Istrail S."/>
            <person name="Sutton G.G."/>
            <person name="Florea L."/>
            <person name="Halpern A.L."/>
            <person name="Mobarry C.M."/>
            <person name="Lippert R."/>
            <person name="Walenz B."/>
            <person name="Shatkay H."/>
            <person name="Dew I."/>
            <person name="Miller J.R."/>
            <person name="Flanigan M.J."/>
            <person name="Edwards N.J."/>
            <person name="Bolanos R."/>
            <person name="Fasulo D."/>
            <person name="Halldorsson B.V."/>
            <person name="Hannenhalli S."/>
            <person name="Turner R."/>
            <person name="Yooseph S."/>
            <person name="Lu F."/>
            <person name="Nusskern D.R."/>
            <person name="Shue B.C."/>
            <person name="Zheng X.H."/>
            <person name="Zhong F."/>
            <person name="Delcher A.L."/>
            <person name="Huson D.H."/>
            <person name="Kravitz S.A."/>
            <person name="Mouchard L."/>
            <person name="Reinert K."/>
            <person name="Remington K.A."/>
            <person name="Clark A.G."/>
            <person name="Waterman M.S."/>
            <person name="Eichler E.E."/>
            <person name="Adams M.D."/>
            <person name="Hunkapiller M.W."/>
            <person name="Myers E.W."/>
            <person name="Venter J.C."/>
        </authorList>
    </citation>
    <scope>NUCLEOTIDE SEQUENCE [LARGE SCALE GENOMIC DNA]</scope>
</reference>
<sequence length="290" mass="33180">MEVSLNHPASNTTSTKNNNSAFFYFESCQPPSPALLLLCIAYTVVLIVGLFGNLSLIIIIFKKQRKAQNFTSILIANLSLSDTLVCVMCIHFTIIYTLMDHWIFGDTMCRLTSYVQSVSISVSIFSLVFTAVERYQLIVNPRGWKPSVTHAYWGITLIWLFSLLLSIPFFLSYHLTDEPFRNLSLPTDLYTHQVACVENWPSKKDRLLFTTSLFLLQYFVPLGFILICYLKIVICLRRRNAKVDKKKENEGRLNENKRINTMLISIVVTFGACWLPRISSMSSLTGIMRC</sequence>
<keyword id="KW-1015">Disulfide bond</keyword>
<keyword id="KW-0297">G-protein coupled receptor</keyword>
<keyword id="KW-0325">Glycoprotein</keyword>
<keyword id="KW-0472">Membrane</keyword>
<keyword id="KW-0675">Receptor</keyword>
<keyword id="KW-1185">Reference proteome</keyword>
<keyword id="KW-0807">Transducer</keyword>
<keyword id="KW-0812">Transmembrane</keyword>
<keyword id="KW-1133">Transmembrane helix</keyword>
<protein>
    <recommendedName>
        <fullName>Putative neuropeptide Y receptor type 6</fullName>
        <shortName>NPY6-R</shortName>
    </recommendedName>
    <alternativeName>
        <fullName>NPY Y1-like receptor</fullName>
    </alternativeName>
    <alternativeName>
        <fullName>Putative pancreatic polypeptide receptor 2</fullName>
        <shortName>PP2</shortName>
    </alternativeName>
</protein>